<comment type="subcellular location">
    <subcellularLocation>
        <location evidence="1">Nucleus membrane</location>
        <topology evidence="2">Multi-pass membrane protein</topology>
    </subcellularLocation>
    <subcellularLocation>
        <location evidence="1">Nucleus</location>
        <location evidence="1">Nucleolus</location>
    </subcellularLocation>
</comment>
<comment type="similarity">
    <text evidence="3">Belongs to the CBF/MAK21 family.</text>
</comment>
<dbReference type="EMBL" id="BC070683">
    <property type="protein sequence ID" value="AAH70683.1"/>
    <property type="molecule type" value="mRNA"/>
</dbReference>
<dbReference type="RefSeq" id="NP_001084831.1">
    <property type="nucleotide sequence ID" value="NM_001091362.1"/>
</dbReference>
<dbReference type="SMR" id="Q6NRQ2"/>
<dbReference type="DNASU" id="431875"/>
<dbReference type="GeneID" id="431875"/>
<dbReference type="KEGG" id="xla:431875"/>
<dbReference type="AGR" id="Xenbase:XB-GENE-6251758"/>
<dbReference type="CTD" id="431875"/>
<dbReference type="Xenbase" id="XB-GENE-6251758">
    <property type="gene designation" value="noc4l.S"/>
</dbReference>
<dbReference type="OrthoDB" id="10263185at2759"/>
<dbReference type="Proteomes" id="UP000186698">
    <property type="component" value="Chromosome 1S"/>
</dbReference>
<dbReference type="Bgee" id="431875">
    <property type="expression patterns" value="Expressed in neurula embryo and 19 other cell types or tissues"/>
</dbReference>
<dbReference type="GO" id="GO:0030692">
    <property type="term" value="C:Noc4p-Nop14p complex"/>
    <property type="evidence" value="ECO:0000318"/>
    <property type="project" value="GO_Central"/>
</dbReference>
<dbReference type="GO" id="GO:0031965">
    <property type="term" value="C:nuclear membrane"/>
    <property type="evidence" value="ECO:0007669"/>
    <property type="project" value="UniProtKB-SubCell"/>
</dbReference>
<dbReference type="GO" id="GO:0005730">
    <property type="term" value="C:nucleolus"/>
    <property type="evidence" value="ECO:0000318"/>
    <property type="project" value="GO_Central"/>
</dbReference>
<dbReference type="GO" id="GO:0032040">
    <property type="term" value="C:small-subunit processome"/>
    <property type="evidence" value="ECO:0000318"/>
    <property type="project" value="GO_Central"/>
</dbReference>
<dbReference type="GO" id="GO:0042254">
    <property type="term" value="P:ribosome biogenesis"/>
    <property type="evidence" value="ECO:0007669"/>
    <property type="project" value="InterPro"/>
</dbReference>
<dbReference type="InterPro" id="IPR016024">
    <property type="entry name" value="ARM-type_fold"/>
</dbReference>
<dbReference type="InterPro" id="IPR005612">
    <property type="entry name" value="CCAAT-binding_factor"/>
</dbReference>
<dbReference type="InterPro" id="IPR027193">
    <property type="entry name" value="Noc4"/>
</dbReference>
<dbReference type="PANTHER" id="PTHR12455">
    <property type="entry name" value="NUCLEOLAR COMPLEX PROTEIN 4"/>
    <property type="match status" value="1"/>
</dbReference>
<dbReference type="PANTHER" id="PTHR12455:SF0">
    <property type="entry name" value="NUCLEOLAR COMPLEX PROTEIN 4 HOMOLOG"/>
    <property type="match status" value="1"/>
</dbReference>
<dbReference type="Pfam" id="PF03914">
    <property type="entry name" value="CBF"/>
    <property type="match status" value="1"/>
</dbReference>
<dbReference type="SUPFAM" id="SSF48371">
    <property type="entry name" value="ARM repeat"/>
    <property type="match status" value="1"/>
</dbReference>
<protein>
    <recommendedName>
        <fullName>Nucleolar complex protein 4 homolog A</fullName>
        <shortName>NOC4 protein homolog A</shortName>
    </recommendedName>
    <alternativeName>
        <fullName>NOC4-like protein A</fullName>
    </alternativeName>
    <alternativeName>
        <fullName>Nucleolar complex-associated protein 4-like protein A</fullName>
    </alternativeName>
</protein>
<reference key="1">
    <citation type="submission" date="2004-05" db="EMBL/GenBank/DDBJ databases">
        <authorList>
            <consortium name="NIH - Xenopus Gene Collection (XGC) project"/>
        </authorList>
    </citation>
    <scope>NUCLEOTIDE SEQUENCE [LARGE SCALE MRNA]</scope>
    <source>
        <tissue>Ovary</tissue>
    </source>
</reference>
<accession>Q6NRQ2</accession>
<name>NOC41_XENLA</name>
<proteinExistence type="evidence at transcript level"/>
<gene>
    <name type="primary">noc4l-a</name>
</gene>
<evidence type="ECO:0000250" key="1">
    <source>
        <dbReference type="UniProtKB" id="Q9BVI4"/>
    </source>
</evidence>
<evidence type="ECO:0000255" key="2"/>
<evidence type="ECO:0000305" key="3"/>
<keyword id="KW-0472">Membrane</keyword>
<keyword id="KW-0539">Nucleus</keyword>
<keyword id="KW-1185">Reference proteome</keyword>
<keyword id="KW-0812">Transmembrane</keyword>
<keyword id="KW-1133">Transmembrane helix</keyword>
<sequence>MAARKTKHACRIQDKRSDAERQDLDTKLAAVLESRGNANAVFDILEHLESKKEEVVQAAIRTASKLFEVMLEKRELYIGDLPAENGTLPDTYSAEDKYKMWMRHRYNSCAACILDLLQHSSFSNQELALCTLMKFIQLEGKFPLENSEWKDSYRFPRELLKFVIDNLLQEEADCTLLITRFQEYLEYDDVRYYTMTVTNDCVSRVQQKNKLVLPPVFQTNVFCLLSSINIPVEESALGNFLVTKNVNNEDWKPSKLKDHKRVFERVWMIFLKHQLSVSLYKKVLLILHESILPHMSKPTLMIDFLTAAYDVGGAISLLALNGLFILIHQHNLEYPDFYKKLYSLLEPSIFHVKYRARFFHLANMFLSSTHLPVYLVAAFAKRLARLALTAPPQVLLMIIPFICNLIRRHPACRVLIHRPSAGDLATDPYIMEEQDPAKSQALESSLWELEVLQQHYHGDVVRAANVISRPLSAQESDISGLLEISSCELYDKEMKKKKFKSVPLEYEPVRGLLGLKSDITAQHFTF</sequence>
<organism>
    <name type="scientific">Xenopus laevis</name>
    <name type="common">African clawed frog</name>
    <dbReference type="NCBI Taxonomy" id="8355"/>
    <lineage>
        <taxon>Eukaryota</taxon>
        <taxon>Metazoa</taxon>
        <taxon>Chordata</taxon>
        <taxon>Craniata</taxon>
        <taxon>Vertebrata</taxon>
        <taxon>Euteleostomi</taxon>
        <taxon>Amphibia</taxon>
        <taxon>Batrachia</taxon>
        <taxon>Anura</taxon>
        <taxon>Pipoidea</taxon>
        <taxon>Pipidae</taxon>
        <taxon>Xenopodinae</taxon>
        <taxon>Xenopus</taxon>
        <taxon>Xenopus</taxon>
    </lineage>
</organism>
<feature type="chain" id="PRO_0000173489" description="Nucleolar complex protein 4 homolog A">
    <location>
        <begin position="1"/>
        <end position="526"/>
    </location>
</feature>
<feature type="transmembrane region" description="Helical" evidence="2">
    <location>
        <begin position="307"/>
        <end position="327"/>
    </location>
</feature>
<feature type="transmembrane region" description="Helical" evidence="2">
    <location>
        <begin position="358"/>
        <end position="378"/>
    </location>
</feature>
<feature type="transmembrane region" description="Helical" evidence="2">
    <location>
        <begin position="386"/>
        <end position="406"/>
    </location>
</feature>